<comment type="function">
    <text>Tubulin is the major constituent of microtubules. The gamma chain is found at microtubule organizing centers (MTOC) such as the spindle pole or the centrosome, suggesting that it is involved in the minus-end nucleation of microtubule assembly. Interacts physically with beta-tubulin and is involved in microtubule function.</text>
</comment>
<comment type="subcellular location">
    <subcellularLocation>
        <location evidence="2">Cytoplasm</location>
        <location evidence="2">Cytoskeleton</location>
        <location evidence="2">Microtubule organizing center</location>
        <location evidence="2">Spindle pole body</location>
    </subcellularLocation>
</comment>
<comment type="similarity">
    <text evidence="2">Belongs to the tubulin family.</text>
</comment>
<comment type="sequence caution" evidence="2">
    <conflict type="erroneous gene model prediction">
        <sequence resource="EMBL-CDS" id="EAA65452"/>
    </conflict>
</comment>
<dbReference type="EMBL" id="X15479">
    <property type="protein sequence ID" value="CAA33507.1"/>
    <property type="molecule type" value="mRNA"/>
</dbReference>
<dbReference type="EMBL" id="AACD01000010">
    <property type="protein sequence ID" value="EAA65452.1"/>
    <property type="status" value="ALT_SEQ"/>
    <property type="molecule type" value="Genomic_DNA"/>
</dbReference>
<dbReference type="EMBL" id="BN001308">
    <property type="protein sequence ID" value="CBF89007.1"/>
    <property type="molecule type" value="Genomic_DNA"/>
</dbReference>
<dbReference type="PIR" id="S03916">
    <property type="entry name" value="S03916"/>
</dbReference>
<dbReference type="RefSeq" id="XP_658280.1">
    <property type="nucleotide sequence ID" value="XM_653188.1"/>
</dbReference>
<dbReference type="SMR" id="P18695"/>
<dbReference type="FunCoup" id="P18695">
    <property type="interactions" value="654"/>
</dbReference>
<dbReference type="STRING" id="227321.P18695"/>
<dbReference type="EnsemblFungi" id="CBF89007">
    <property type="protein sequence ID" value="CBF89007"/>
    <property type="gene ID" value="ANIA_00676"/>
</dbReference>
<dbReference type="KEGG" id="ani:ANIA_00676"/>
<dbReference type="VEuPathDB" id="FungiDB:AN0676"/>
<dbReference type="eggNOG" id="KOG1374">
    <property type="taxonomic scope" value="Eukaryota"/>
</dbReference>
<dbReference type="HOGENOM" id="CLU_015718_1_0_1"/>
<dbReference type="InParanoid" id="P18695"/>
<dbReference type="OMA" id="HRYISIL"/>
<dbReference type="OrthoDB" id="10249382at2759"/>
<dbReference type="Proteomes" id="UP000000560">
    <property type="component" value="Chromosome VIII"/>
</dbReference>
<dbReference type="GO" id="GO:0005737">
    <property type="term" value="C:cytoplasm"/>
    <property type="evidence" value="ECO:0000318"/>
    <property type="project" value="GO_Central"/>
</dbReference>
<dbReference type="GO" id="GO:0000923">
    <property type="term" value="C:equatorial microtubule organizing center"/>
    <property type="evidence" value="ECO:0007669"/>
    <property type="project" value="EnsemblFungi"/>
</dbReference>
<dbReference type="GO" id="GO:0000931">
    <property type="term" value="C:gamma-tubulin ring complex"/>
    <property type="evidence" value="ECO:0000318"/>
    <property type="project" value="GO_Central"/>
</dbReference>
<dbReference type="GO" id="GO:0008275">
    <property type="term" value="C:gamma-tubulin small complex"/>
    <property type="evidence" value="ECO:0007669"/>
    <property type="project" value="EnsemblFungi"/>
</dbReference>
<dbReference type="GO" id="GO:0061496">
    <property type="term" value="C:half bridge of mitotic spindle pole body"/>
    <property type="evidence" value="ECO:0007669"/>
    <property type="project" value="EnsemblFungi"/>
</dbReference>
<dbReference type="GO" id="GO:0061497">
    <property type="term" value="C:inner plaque of mitotic spindle pole body"/>
    <property type="evidence" value="ECO:0007669"/>
    <property type="project" value="EnsemblFungi"/>
</dbReference>
<dbReference type="GO" id="GO:0031021">
    <property type="term" value="C:interphase microtubule organizing center"/>
    <property type="evidence" value="ECO:0007669"/>
    <property type="project" value="EnsemblFungi"/>
</dbReference>
<dbReference type="GO" id="GO:0043332">
    <property type="term" value="C:mating projection tip"/>
    <property type="evidence" value="ECO:0007669"/>
    <property type="project" value="EnsemblFungi"/>
</dbReference>
<dbReference type="GO" id="GO:0005874">
    <property type="term" value="C:microtubule"/>
    <property type="evidence" value="ECO:0007669"/>
    <property type="project" value="UniProtKB-KW"/>
</dbReference>
<dbReference type="GO" id="GO:0005815">
    <property type="term" value="C:microtubule organizing center"/>
    <property type="evidence" value="ECO:0000314"/>
    <property type="project" value="AspGD"/>
</dbReference>
<dbReference type="GO" id="GO:0005634">
    <property type="term" value="C:nucleus"/>
    <property type="evidence" value="ECO:0000318"/>
    <property type="project" value="GO_Central"/>
</dbReference>
<dbReference type="GO" id="GO:0071957">
    <property type="term" value="C:old mitotic spindle pole body"/>
    <property type="evidence" value="ECO:0007669"/>
    <property type="project" value="EnsemblFungi"/>
</dbReference>
<dbReference type="GO" id="GO:0061499">
    <property type="term" value="C:outer plaque of mitotic spindle pole body"/>
    <property type="evidence" value="ECO:0007669"/>
    <property type="project" value="EnsemblFungi"/>
</dbReference>
<dbReference type="GO" id="GO:0005819">
    <property type="term" value="C:spindle"/>
    <property type="evidence" value="ECO:0000318"/>
    <property type="project" value="GO_Central"/>
</dbReference>
<dbReference type="GO" id="GO:0005816">
    <property type="term" value="C:spindle pole body"/>
    <property type="evidence" value="ECO:0000314"/>
    <property type="project" value="AspGD"/>
</dbReference>
<dbReference type="GO" id="GO:0005525">
    <property type="term" value="F:GTP binding"/>
    <property type="evidence" value="ECO:0000318"/>
    <property type="project" value="GO_Central"/>
</dbReference>
<dbReference type="GO" id="GO:0140490">
    <property type="term" value="F:microtubule nucleator activity"/>
    <property type="evidence" value="ECO:0000318"/>
    <property type="project" value="GO_Central"/>
</dbReference>
<dbReference type="GO" id="GO:0005200">
    <property type="term" value="F:structural constituent of cytoskeleton"/>
    <property type="evidence" value="ECO:0000315"/>
    <property type="project" value="AspGD"/>
</dbReference>
<dbReference type="GO" id="GO:0031122">
    <property type="term" value="P:cytoplasmic microtubule organization"/>
    <property type="evidence" value="ECO:0000315"/>
    <property type="project" value="AspGD"/>
</dbReference>
<dbReference type="GO" id="GO:0000212">
    <property type="term" value="P:meiotic spindle organization"/>
    <property type="evidence" value="ECO:0000318"/>
    <property type="project" value="GO_Central"/>
</dbReference>
<dbReference type="GO" id="GO:0007020">
    <property type="term" value="P:microtubule nucleation"/>
    <property type="evidence" value="ECO:0000318"/>
    <property type="project" value="GO_Central"/>
</dbReference>
<dbReference type="GO" id="GO:0051417">
    <property type="term" value="P:microtubule nucleation by spindle pole body"/>
    <property type="evidence" value="ECO:0000315"/>
    <property type="project" value="AspGD"/>
</dbReference>
<dbReference type="GO" id="GO:0000278">
    <property type="term" value="P:mitotic cell cycle"/>
    <property type="evidence" value="ECO:0000315"/>
    <property type="project" value="AspGD"/>
</dbReference>
<dbReference type="GO" id="GO:1902408">
    <property type="term" value="P:mitotic cytokinesis, division site positioning"/>
    <property type="evidence" value="ECO:0007669"/>
    <property type="project" value="EnsemblFungi"/>
</dbReference>
<dbReference type="GO" id="GO:0000070">
    <property type="term" value="P:mitotic sister chromatid segregation"/>
    <property type="evidence" value="ECO:0000318"/>
    <property type="project" value="GO_Central"/>
</dbReference>
<dbReference type="GO" id="GO:0051256">
    <property type="term" value="P:mitotic spindle midzone assembly"/>
    <property type="evidence" value="ECO:0007669"/>
    <property type="project" value="EnsemblFungi"/>
</dbReference>
<dbReference type="GO" id="GO:0007052">
    <property type="term" value="P:mitotic spindle organization"/>
    <property type="evidence" value="ECO:0000318"/>
    <property type="project" value="GO_Central"/>
</dbReference>
<dbReference type="CDD" id="cd02188">
    <property type="entry name" value="gamma_tubulin"/>
    <property type="match status" value="1"/>
</dbReference>
<dbReference type="FunFam" id="1.10.287.600:FF:000004">
    <property type="entry name" value="Tubulin gamma chain"/>
    <property type="match status" value="1"/>
</dbReference>
<dbReference type="FunFam" id="3.30.1330.20:FF:000003">
    <property type="entry name" value="Tubulin gamma chain"/>
    <property type="match status" value="1"/>
</dbReference>
<dbReference type="FunFam" id="3.40.50.1440:FF:000012">
    <property type="entry name" value="Tubulin gamma chain"/>
    <property type="match status" value="1"/>
</dbReference>
<dbReference type="Gene3D" id="1.10.287.600">
    <property type="entry name" value="Helix hairpin bin"/>
    <property type="match status" value="1"/>
</dbReference>
<dbReference type="Gene3D" id="3.30.1330.20">
    <property type="entry name" value="Tubulin/FtsZ, C-terminal domain"/>
    <property type="match status" value="1"/>
</dbReference>
<dbReference type="Gene3D" id="3.40.50.1440">
    <property type="entry name" value="Tubulin/FtsZ, GTPase domain"/>
    <property type="match status" value="1"/>
</dbReference>
<dbReference type="InterPro" id="IPR002454">
    <property type="entry name" value="Gamma_tubulin"/>
</dbReference>
<dbReference type="InterPro" id="IPR008280">
    <property type="entry name" value="Tub_FtsZ_C"/>
</dbReference>
<dbReference type="InterPro" id="IPR000217">
    <property type="entry name" value="Tubulin"/>
</dbReference>
<dbReference type="InterPro" id="IPR037103">
    <property type="entry name" value="Tubulin/FtsZ-like_C"/>
</dbReference>
<dbReference type="InterPro" id="IPR018316">
    <property type="entry name" value="Tubulin/FtsZ_2-layer-sand-dom"/>
</dbReference>
<dbReference type="InterPro" id="IPR036525">
    <property type="entry name" value="Tubulin/FtsZ_GTPase_sf"/>
</dbReference>
<dbReference type="InterPro" id="IPR023123">
    <property type="entry name" value="Tubulin_C"/>
</dbReference>
<dbReference type="InterPro" id="IPR017975">
    <property type="entry name" value="Tubulin_CS"/>
</dbReference>
<dbReference type="InterPro" id="IPR003008">
    <property type="entry name" value="Tubulin_FtsZ_GTPase"/>
</dbReference>
<dbReference type="PANTHER" id="PTHR11588">
    <property type="entry name" value="TUBULIN"/>
    <property type="match status" value="1"/>
</dbReference>
<dbReference type="Pfam" id="PF00091">
    <property type="entry name" value="Tubulin"/>
    <property type="match status" value="1"/>
</dbReference>
<dbReference type="Pfam" id="PF03953">
    <property type="entry name" value="Tubulin_C"/>
    <property type="match status" value="1"/>
</dbReference>
<dbReference type="PRINTS" id="PR01164">
    <property type="entry name" value="GAMMATUBULIN"/>
</dbReference>
<dbReference type="PRINTS" id="PR01161">
    <property type="entry name" value="TUBULIN"/>
</dbReference>
<dbReference type="SMART" id="SM00864">
    <property type="entry name" value="Tubulin"/>
    <property type="match status" value="1"/>
</dbReference>
<dbReference type="SMART" id="SM00865">
    <property type="entry name" value="Tubulin_C"/>
    <property type="match status" value="1"/>
</dbReference>
<dbReference type="SUPFAM" id="SSF55307">
    <property type="entry name" value="Tubulin C-terminal domain-like"/>
    <property type="match status" value="1"/>
</dbReference>
<dbReference type="SUPFAM" id="SSF52490">
    <property type="entry name" value="Tubulin nucleotide-binding domain-like"/>
    <property type="match status" value="1"/>
</dbReference>
<dbReference type="PROSITE" id="PS00227">
    <property type="entry name" value="TUBULIN"/>
    <property type="match status" value="1"/>
</dbReference>
<reference key="1">
    <citation type="journal article" date="1989" name="Nature">
        <title>Identification of gamma-tubulin, a new member of the tubulin superfamily encoded by mipA gene of Aspergillus nidulans.</title>
        <authorList>
            <person name="Oakley C.E."/>
            <person name="Oakley B.R."/>
        </authorList>
    </citation>
    <scope>NUCLEOTIDE SEQUENCE [MRNA]</scope>
</reference>
<reference key="2">
    <citation type="journal article" date="2005" name="Nature">
        <title>Sequencing of Aspergillus nidulans and comparative analysis with A. fumigatus and A. oryzae.</title>
        <authorList>
            <person name="Galagan J.E."/>
            <person name="Calvo S.E."/>
            <person name="Cuomo C."/>
            <person name="Ma L.-J."/>
            <person name="Wortman J.R."/>
            <person name="Batzoglou S."/>
            <person name="Lee S.-I."/>
            <person name="Bastuerkmen M."/>
            <person name="Spevak C.C."/>
            <person name="Clutterbuck J."/>
            <person name="Kapitonov V."/>
            <person name="Jurka J."/>
            <person name="Scazzocchio C."/>
            <person name="Farman M.L."/>
            <person name="Butler J."/>
            <person name="Purcell S."/>
            <person name="Harris S."/>
            <person name="Braus G.H."/>
            <person name="Draht O."/>
            <person name="Busch S."/>
            <person name="D'Enfert C."/>
            <person name="Bouchier C."/>
            <person name="Goldman G.H."/>
            <person name="Bell-Pedersen D."/>
            <person name="Griffiths-Jones S."/>
            <person name="Doonan J.H."/>
            <person name="Yu J."/>
            <person name="Vienken K."/>
            <person name="Pain A."/>
            <person name="Freitag M."/>
            <person name="Selker E.U."/>
            <person name="Archer D.B."/>
            <person name="Penalva M.A."/>
            <person name="Oakley B.R."/>
            <person name="Momany M."/>
            <person name="Tanaka T."/>
            <person name="Kumagai T."/>
            <person name="Asai K."/>
            <person name="Machida M."/>
            <person name="Nierman W.C."/>
            <person name="Denning D.W."/>
            <person name="Caddick M.X."/>
            <person name="Hynes M."/>
            <person name="Paoletti M."/>
            <person name="Fischer R."/>
            <person name="Miller B.L."/>
            <person name="Dyer P.S."/>
            <person name="Sachs M.S."/>
            <person name="Osmani S.A."/>
            <person name="Birren B.W."/>
        </authorList>
    </citation>
    <scope>NUCLEOTIDE SEQUENCE [LARGE SCALE GENOMIC DNA]</scope>
    <source>
        <strain>FGSC A4 / ATCC 38163 / CBS 112.46 / NRRL 194 / M139</strain>
    </source>
</reference>
<reference key="3">
    <citation type="journal article" date="2009" name="Fungal Genet. Biol.">
        <title>The 2008 update of the Aspergillus nidulans genome annotation: a community effort.</title>
        <authorList>
            <person name="Wortman J.R."/>
            <person name="Gilsenan J.M."/>
            <person name="Joardar V."/>
            <person name="Deegan J."/>
            <person name="Clutterbuck J."/>
            <person name="Andersen M.R."/>
            <person name="Archer D."/>
            <person name="Bencina M."/>
            <person name="Braus G."/>
            <person name="Coutinho P."/>
            <person name="von Dohren H."/>
            <person name="Doonan J."/>
            <person name="Driessen A.J."/>
            <person name="Durek P."/>
            <person name="Espeso E."/>
            <person name="Fekete E."/>
            <person name="Flipphi M."/>
            <person name="Estrada C.G."/>
            <person name="Geysens S."/>
            <person name="Goldman G."/>
            <person name="de Groot P.W."/>
            <person name="Hansen K."/>
            <person name="Harris S.D."/>
            <person name="Heinekamp T."/>
            <person name="Helmstaedt K."/>
            <person name="Henrissat B."/>
            <person name="Hofmann G."/>
            <person name="Homan T."/>
            <person name="Horio T."/>
            <person name="Horiuchi H."/>
            <person name="James S."/>
            <person name="Jones M."/>
            <person name="Karaffa L."/>
            <person name="Karanyi Z."/>
            <person name="Kato M."/>
            <person name="Keller N."/>
            <person name="Kelly D.E."/>
            <person name="Kiel J.A."/>
            <person name="Kim J.M."/>
            <person name="van der Klei I.J."/>
            <person name="Klis F.M."/>
            <person name="Kovalchuk A."/>
            <person name="Krasevec N."/>
            <person name="Kubicek C.P."/>
            <person name="Liu B."/>
            <person name="Maccabe A."/>
            <person name="Meyer V."/>
            <person name="Mirabito P."/>
            <person name="Miskei M."/>
            <person name="Mos M."/>
            <person name="Mullins J."/>
            <person name="Nelson D.R."/>
            <person name="Nielsen J."/>
            <person name="Oakley B.R."/>
            <person name="Osmani S.A."/>
            <person name="Pakula T."/>
            <person name="Paszewski A."/>
            <person name="Paulsen I."/>
            <person name="Pilsyk S."/>
            <person name="Pocsi I."/>
            <person name="Punt P.J."/>
            <person name="Ram A.F."/>
            <person name="Ren Q."/>
            <person name="Robellet X."/>
            <person name="Robson G."/>
            <person name="Seiboth B."/>
            <person name="van Solingen P."/>
            <person name="Specht T."/>
            <person name="Sun J."/>
            <person name="Taheri-Talesh N."/>
            <person name="Takeshita N."/>
            <person name="Ussery D."/>
            <person name="vanKuyk P.A."/>
            <person name="Visser H."/>
            <person name="van de Vondervoort P.J."/>
            <person name="de Vries R.P."/>
            <person name="Walton J."/>
            <person name="Xiang X."/>
            <person name="Xiong Y."/>
            <person name="Zeng A.P."/>
            <person name="Brandt B.W."/>
            <person name="Cornell M.J."/>
            <person name="van den Hondel C.A."/>
            <person name="Visser J."/>
            <person name="Oliver S.G."/>
            <person name="Turner G."/>
        </authorList>
    </citation>
    <scope>GENOME REANNOTATION</scope>
    <source>
        <strain>FGSC A4 / ATCC 38163 / CBS 112.46 / NRRL 194 / M139</strain>
    </source>
</reference>
<protein>
    <recommendedName>
        <fullName>Tubulin gamma chain</fullName>
    </recommendedName>
    <alternativeName>
        <fullName>Gamma-tubulin</fullName>
    </alternativeName>
</protein>
<evidence type="ECO:0000255" key="1"/>
<evidence type="ECO:0000305" key="2"/>
<feature type="chain" id="PRO_0000048456" description="Tubulin gamma chain">
    <location>
        <begin position="1"/>
        <end position="454"/>
    </location>
</feature>
<feature type="binding site" evidence="1">
    <location>
        <begin position="142"/>
        <end position="148"/>
    </location>
    <ligand>
        <name>GTP</name>
        <dbReference type="ChEBI" id="CHEBI:37565"/>
    </ligand>
</feature>
<accession>P18695</accession>
<accession>C8VRR9</accession>
<accession>Q5BFK4</accession>
<gene>
    <name type="primary">mipA</name>
    <name type="ORF">AN0676</name>
</gene>
<proteinExistence type="evidence at transcript level"/>
<sequence>MPREIITIQAGQCGNNVGSQFWQQLCLEHGISQDGNLEEFATEGGDRKDVFFYQSDDTRYIPRAILLDLEPRVLNGIQSGPYKNIYNPENFFIGQQGIGAGNNWGAGYAAGEVVQEEVFDMIDREADGSDSLEGFMFLHSIAGGTGSGLGSFLLERMNDRFPKKLIQTYSVFPDTQAADVVVNPYNSLLAMRRLTQNADSVVVLDNAALSRIVADRLHVQEPSFQQTNRLVSTVMSASTTTLRYPGYMHNDLVGIIASLIPTPRSHFLLTSYTPFTGDNIDQAKTVRKTTVLDVMRRLLQPKNRMVSINPSKSSCYISILNIIQGEADPTDVHKSLLRIRERRLASFIPWGPASIQVALTKKSPYIQNTHRVSGLMLANHTSVATLFKRIVQQYDRLRKRNAFLEQYKKEAPFQDGLDEFDEARAVVMDLVGEYEAAERENYLDPDAGKDEVGV</sequence>
<organism>
    <name type="scientific">Emericella nidulans (strain FGSC A4 / ATCC 38163 / CBS 112.46 / NRRL 194 / M139)</name>
    <name type="common">Aspergillus nidulans</name>
    <dbReference type="NCBI Taxonomy" id="227321"/>
    <lineage>
        <taxon>Eukaryota</taxon>
        <taxon>Fungi</taxon>
        <taxon>Dikarya</taxon>
        <taxon>Ascomycota</taxon>
        <taxon>Pezizomycotina</taxon>
        <taxon>Eurotiomycetes</taxon>
        <taxon>Eurotiomycetidae</taxon>
        <taxon>Eurotiales</taxon>
        <taxon>Aspergillaceae</taxon>
        <taxon>Aspergillus</taxon>
        <taxon>Aspergillus subgen. Nidulantes</taxon>
    </lineage>
</organism>
<name>TBG_EMENI</name>
<keyword id="KW-0963">Cytoplasm</keyword>
<keyword id="KW-0206">Cytoskeleton</keyword>
<keyword id="KW-0342">GTP-binding</keyword>
<keyword id="KW-0493">Microtubule</keyword>
<keyword id="KW-0547">Nucleotide-binding</keyword>
<keyword id="KW-1185">Reference proteome</keyword>